<name>ATPD_RHILO</name>
<dbReference type="EMBL" id="BA000012">
    <property type="protein sequence ID" value="BAB50812.1"/>
    <property type="molecule type" value="Genomic_DNA"/>
</dbReference>
<dbReference type="RefSeq" id="WP_010912155.1">
    <property type="nucleotide sequence ID" value="NC_002678.2"/>
</dbReference>
<dbReference type="SMR" id="Q98EV5"/>
<dbReference type="KEGG" id="mlo:mll4066"/>
<dbReference type="PATRIC" id="fig|266835.9.peg.3218"/>
<dbReference type="eggNOG" id="COG0712">
    <property type="taxonomic scope" value="Bacteria"/>
</dbReference>
<dbReference type="HOGENOM" id="CLU_085114_0_1_5"/>
<dbReference type="Proteomes" id="UP000000552">
    <property type="component" value="Chromosome"/>
</dbReference>
<dbReference type="GO" id="GO:0005886">
    <property type="term" value="C:plasma membrane"/>
    <property type="evidence" value="ECO:0007669"/>
    <property type="project" value="UniProtKB-SubCell"/>
</dbReference>
<dbReference type="GO" id="GO:0045259">
    <property type="term" value="C:proton-transporting ATP synthase complex"/>
    <property type="evidence" value="ECO:0007669"/>
    <property type="project" value="UniProtKB-KW"/>
</dbReference>
<dbReference type="GO" id="GO:0046933">
    <property type="term" value="F:proton-transporting ATP synthase activity, rotational mechanism"/>
    <property type="evidence" value="ECO:0007669"/>
    <property type="project" value="UniProtKB-UniRule"/>
</dbReference>
<dbReference type="Gene3D" id="1.10.520.20">
    <property type="entry name" value="N-terminal domain of the delta subunit of the F1F0-ATP synthase"/>
    <property type="match status" value="1"/>
</dbReference>
<dbReference type="HAMAP" id="MF_01416">
    <property type="entry name" value="ATP_synth_delta_bact"/>
    <property type="match status" value="1"/>
</dbReference>
<dbReference type="InterPro" id="IPR026015">
    <property type="entry name" value="ATP_synth_OSCP/delta_N_sf"/>
</dbReference>
<dbReference type="InterPro" id="IPR020781">
    <property type="entry name" value="ATPase_OSCP/d_CS"/>
</dbReference>
<dbReference type="InterPro" id="IPR000711">
    <property type="entry name" value="ATPase_OSCP/dsu"/>
</dbReference>
<dbReference type="NCBIfam" id="TIGR01145">
    <property type="entry name" value="ATP_synt_delta"/>
    <property type="match status" value="1"/>
</dbReference>
<dbReference type="NCBIfam" id="NF004402">
    <property type="entry name" value="PRK05758.2-2"/>
    <property type="match status" value="1"/>
</dbReference>
<dbReference type="NCBIfam" id="NF004406">
    <property type="entry name" value="PRK05758.3-2"/>
    <property type="match status" value="1"/>
</dbReference>
<dbReference type="PANTHER" id="PTHR11910">
    <property type="entry name" value="ATP SYNTHASE DELTA CHAIN"/>
    <property type="match status" value="1"/>
</dbReference>
<dbReference type="Pfam" id="PF00213">
    <property type="entry name" value="OSCP"/>
    <property type="match status" value="1"/>
</dbReference>
<dbReference type="PRINTS" id="PR00125">
    <property type="entry name" value="ATPASEDELTA"/>
</dbReference>
<dbReference type="SUPFAM" id="SSF47928">
    <property type="entry name" value="N-terminal domain of the delta subunit of the F1F0-ATP synthase"/>
    <property type="match status" value="1"/>
</dbReference>
<dbReference type="PROSITE" id="PS00389">
    <property type="entry name" value="ATPASE_DELTA"/>
    <property type="match status" value="1"/>
</dbReference>
<evidence type="ECO:0000255" key="1">
    <source>
        <dbReference type="HAMAP-Rule" id="MF_01416"/>
    </source>
</evidence>
<proteinExistence type="inferred from homology"/>
<sequence length="186" mass="19406">MAQSSSPISGVAERYAGSLFELALQANSVAKVESDLNSFEAMLAGSSDLTRLINSPVFSGEEQAKAIAAIADKAGITGLTGNFLRVVARNRRLFAVPGMIKAFRQIAAEHRGETAAEVTSAHELTAAQQTELKAALKSVAGKDVAISVTVDPSLLGGLVVKIGSRQIDTSLKTKLNSLKLALKEVG</sequence>
<protein>
    <recommendedName>
        <fullName evidence="1">ATP synthase subunit delta</fullName>
    </recommendedName>
    <alternativeName>
        <fullName evidence="1">ATP synthase F(1) sector subunit delta</fullName>
    </alternativeName>
    <alternativeName>
        <fullName evidence="1">F-type ATPase subunit delta</fullName>
        <shortName evidence="1">F-ATPase subunit delta</shortName>
    </alternativeName>
</protein>
<comment type="function">
    <text evidence="1">F(1)F(0) ATP synthase produces ATP from ADP in the presence of a proton or sodium gradient. F-type ATPases consist of two structural domains, F(1) containing the extramembraneous catalytic core and F(0) containing the membrane proton channel, linked together by a central stalk and a peripheral stalk. During catalysis, ATP synthesis in the catalytic domain of F(1) is coupled via a rotary mechanism of the central stalk subunits to proton translocation.</text>
</comment>
<comment type="function">
    <text evidence="1">This protein is part of the stalk that links CF(0) to CF(1). It either transmits conformational changes from CF(0) to CF(1) or is implicated in proton conduction.</text>
</comment>
<comment type="subunit">
    <text evidence="1">F-type ATPases have 2 components, F(1) - the catalytic core - and F(0) - the membrane proton channel. F(1) has five subunits: alpha(3), beta(3), gamma(1), delta(1), epsilon(1). F(0) has three main subunits: a(1), b(2) and c(10-14). The alpha and beta chains form an alternating ring which encloses part of the gamma chain. F(1) is attached to F(0) by a central stalk formed by the gamma and epsilon chains, while a peripheral stalk is formed by the delta and b chains.</text>
</comment>
<comment type="subcellular location">
    <subcellularLocation>
        <location evidence="1">Cell inner membrane</location>
        <topology evidence="1">Peripheral membrane protein</topology>
    </subcellularLocation>
</comment>
<comment type="similarity">
    <text evidence="1">Belongs to the ATPase delta chain family.</text>
</comment>
<gene>
    <name evidence="1" type="primary">atpH</name>
    <name type="ordered locus">mll4066</name>
</gene>
<feature type="chain" id="PRO_0000371092" description="ATP synthase subunit delta">
    <location>
        <begin position="1"/>
        <end position="186"/>
    </location>
</feature>
<accession>Q98EV5</accession>
<organism>
    <name type="scientific">Mesorhizobium japonicum (strain LMG 29417 / CECT 9101 / MAFF 303099)</name>
    <name type="common">Mesorhizobium loti (strain MAFF 303099)</name>
    <dbReference type="NCBI Taxonomy" id="266835"/>
    <lineage>
        <taxon>Bacteria</taxon>
        <taxon>Pseudomonadati</taxon>
        <taxon>Pseudomonadota</taxon>
        <taxon>Alphaproteobacteria</taxon>
        <taxon>Hyphomicrobiales</taxon>
        <taxon>Phyllobacteriaceae</taxon>
        <taxon>Mesorhizobium</taxon>
    </lineage>
</organism>
<keyword id="KW-0066">ATP synthesis</keyword>
<keyword id="KW-0997">Cell inner membrane</keyword>
<keyword id="KW-1003">Cell membrane</keyword>
<keyword id="KW-0139">CF(1)</keyword>
<keyword id="KW-0375">Hydrogen ion transport</keyword>
<keyword id="KW-0406">Ion transport</keyword>
<keyword id="KW-0472">Membrane</keyword>
<keyword id="KW-0813">Transport</keyword>
<reference key="1">
    <citation type="journal article" date="2000" name="DNA Res.">
        <title>Complete genome structure of the nitrogen-fixing symbiotic bacterium Mesorhizobium loti.</title>
        <authorList>
            <person name="Kaneko T."/>
            <person name="Nakamura Y."/>
            <person name="Sato S."/>
            <person name="Asamizu E."/>
            <person name="Kato T."/>
            <person name="Sasamoto S."/>
            <person name="Watanabe A."/>
            <person name="Idesawa K."/>
            <person name="Ishikawa A."/>
            <person name="Kawashima K."/>
            <person name="Kimura T."/>
            <person name="Kishida Y."/>
            <person name="Kiyokawa C."/>
            <person name="Kohara M."/>
            <person name="Matsumoto M."/>
            <person name="Matsuno A."/>
            <person name="Mochizuki Y."/>
            <person name="Nakayama S."/>
            <person name="Nakazaki N."/>
            <person name="Shimpo S."/>
            <person name="Sugimoto M."/>
            <person name="Takeuchi C."/>
            <person name="Yamada M."/>
            <person name="Tabata S."/>
        </authorList>
    </citation>
    <scope>NUCLEOTIDE SEQUENCE [LARGE SCALE GENOMIC DNA]</scope>
    <source>
        <strain>LMG 29417 / CECT 9101 / MAFF 303099</strain>
    </source>
</reference>